<protein>
    <recommendedName>
        <fullName>Probable endonuclease LCL3</fullName>
        <ecNumber>3.1.-.-</ecNumber>
    </recommendedName>
</protein>
<comment type="subcellular location">
    <subcellularLocation>
        <location>Mitochondrion</location>
    </subcellularLocation>
    <subcellularLocation>
        <location evidence="1">Membrane</location>
        <topology evidence="1">Single-pass membrane protein</topology>
    </subcellularLocation>
</comment>
<comment type="similarity">
    <text evidence="4">Belongs to the LCL3 family.</text>
</comment>
<gene>
    <name type="primary">LCL3</name>
    <name type="ORF">CLUG_03208</name>
</gene>
<proteinExistence type="inferred from homology"/>
<feature type="chain" id="PRO_0000408655" description="Probable endonuclease LCL3">
    <location>
        <begin position="1"/>
        <end position="233"/>
    </location>
</feature>
<feature type="transmembrane region" description="Helical" evidence="2">
    <location>
        <begin position="22"/>
        <end position="44"/>
    </location>
</feature>
<feature type="domain" description="TNase-like" evidence="3">
    <location>
        <begin position="62"/>
        <end position="220"/>
    </location>
</feature>
<feature type="active site" evidence="3">
    <location>
        <position position="111"/>
    </location>
</feature>
<feature type="active site" evidence="3">
    <location>
        <position position="119"/>
    </location>
</feature>
<feature type="active site" evidence="3">
    <location>
        <position position="159"/>
    </location>
</feature>
<feature type="binding site" evidence="3">
    <location>
        <position position="116"/>
    </location>
    <ligand>
        <name>Ca(2+)</name>
        <dbReference type="ChEBI" id="CHEBI:29108"/>
    </ligand>
</feature>
<reference key="1">
    <citation type="journal article" date="2009" name="Nature">
        <title>Evolution of pathogenicity and sexual reproduction in eight Candida genomes.</title>
        <authorList>
            <person name="Butler G."/>
            <person name="Rasmussen M.D."/>
            <person name="Lin M.F."/>
            <person name="Santos M.A.S."/>
            <person name="Sakthikumar S."/>
            <person name="Munro C.A."/>
            <person name="Rheinbay E."/>
            <person name="Grabherr M."/>
            <person name="Forche A."/>
            <person name="Reedy J.L."/>
            <person name="Agrafioti I."/>
            <person name="Arnaud M.B."/>
            <person name="Bates S."/>
            <person name="Brown A.J.P."/>
            <person name="Brunke S."/>
            <person name="Costanzo M.C."/>
            <person name="Fitzpatrick D.A."/>
            <person name="de Groot P.W.J."/>
            <person name="Harris D."/>
            <person name="Hoyer L.L."/>
            <person name="Hube B."/>
            <person name="Klis F.M."/>
            <person name="Kodira C."/>
            <person name="Lennard N."/>
            <person name="Logue M.E."/>
            <person name="Martin R."/>
            <person name="Neiman A.M."/>
            <person name="Nikolaou E."/>
            <person name="Quail M.A."/>
            <person name="Quinn J."/>
            <person name="Santos M.C."/>
            <person name="Schmitzberger F.F."/>
            <person name="Sherlock G."/>
            <person name="Shah P."/>
            <person name="Silverstein K.A.T."/>
            <person name="Skrzypek M.S."/>
            <person name="Soll D."/>
            <person name="Staggs R."/>
            <person name="Stansfield I."/>
            <person name="Stumpf M.P.H."/>
            <person name="Sudbery P.E."/>
            <person name="Srikantha T."/>
            <person name="Zeng Q."/>
            <person name="Berman J."/>
            <person name="Berriman M."/>
            <person name="Heitman J."/>
            <person name="Gow N.A.R."/>
            <person name="Lorenz M.C."/>
            <person name="Birren B.W."/>
            <person name="Kellis M."/>
            <person name="Cuomo C.A."/>
        </authorList>
    </citation>
    <scope>NUCLEOTIDE SEQUENCE [LARGE SCALE GENOMIC DNA]</scope>
    <source>
        <strain>ATCC 42720</strain>
    </source>
</reference>
<evidence type="ECO:0000250" key="1"/>
<evidence type="ECO:0000255" key="2"/>
<evidence type="ECO:0000255" key="3">
    <source>
        <dbReference type="PROSITE-ProRule" id="PRU00272"/>
    </source>
</evidence>
<evidence type="ECO:0000305" key="4"/>
<keyword id="KW-0106">Calcium</keyword>
<keyword id="KW-0255">Endonuclease</keyword>
<keyword id="KW-0378">Hydrolase</keyword>
<keyword id="KW-0472">Membrane</keyword>
<keyword id="KW-0479">Metal-binding</keyword>
<keyword id="KW-0496">Mitochondrion</keyword>
<keyword id="KW-0540">Nuclease</keyword>
<keyword id="KW-1185">Reference proteome</keyword>
<keyword id="KW-0812">Transmembrane</keyword>
<keyword id="KW-1133">Transmembrane helix</keyword>
<dbReference type="EC" id="3.1.-.-"/>
<dbReference type="EMBL" id="CH408079">
    <property type="protein sequence ID" value="EEQ39080.1"/>
    <property type="molecule type" value="Genomic_DNA"/>
</dbReference>
<dbReference type="RefSeq" id="XP_002615967.1">
    <property type="nucleotide sequence ID" value="XM_002615921.1"/>
</dbReference>
<dbReference type="SMR" id="C4Y4X4"/>
<dbReference type="FunCoup" id="C4Y4X4">
    <property type="interactions" value="16"/>
</dbReference>
<dbReference type="STRING" id="306902.C4Y4X4"/>
<dbReference type="GeneID" id="8497101"/>
<dbReference type="KEGG" id="clu:CLUG_03208"/>
<dbReference type="VEuPathDB" id="FungiDB:CLUG_03208"/>
<dbReference type="HOGENOM" id="CLU_046484_0_1_1"/>
<dbReference type="InParanoid" id="C4Y4X4"/>
<dbReference type="OMA" id="IYHTPGG"/>
<dbReference type="OrthoDB" id="30574at4891"/>
<dbReference type="Proteomes" id="UP000007703">
    <property type="component" value="Unassembled WGS sequence"/>
</dbReference>
<dbReference type="GO" id="GO:0016020">
    <property type="term" value="C:membrane"/>
    <property type="evidence" value="ECO:0007669"/>
    <property type="project" value="UniProtKB-SubCell"/>
</dbReference>
<dbReference type="GO" id="GO:0005739">
    <property type="term" value="C:mitochondrion"/>
    <property type="evidence" value="ECO:0007669"/>
    <property type="project" value="UniProtKB-SubCell"/>
</dbReference>
<dbReference type="GO" id="GO:0004519">
    <property type="term" value="F:endonuclease activity"/>
    <property type="evidence" value="ECO:0007669"/>
    <property type="project" value="UniProtKB-KW"/>
</dbReference>
<dbReference type="GO" id="GO:0046872">
    <property type="term" value="F:metal ion binding"/>
    <property type="evidence" value="ECO:0007669"/>
    <property type="project" value="UniProtKB-KW"/>
</dbReference>
<dbReference type="FunFam" id="2.40.50.90:FF:000035">
    <property type="entry name" value="Probable endonuclease LCL3"/>
    <property type="match status" value="1"/>
</dbReference>
<dbReference type="Gene3D" id="2.40.50.90">
    <property type="match status" value="1"/>
</dbReference>
<dbReference type="InterPro" id="IPR035437">
    <property type="entry name" value="SNase_OB-fold_sf"/>
</dbReference>
<dbReference type="InterPro" id="IPR016071">
    <property type="entry name" value="Staphylococal_nuclease_OB-fold"/>
</dbReference>
<dbReference type="PANTHER" id="PTHR12302">
    <property type="entry name" value="EBNA2 BINDING PROTEIN P100"/>
    <property type="match status" value="1"/>
</dbReference>
<dbReference type="PANTHER" id="PTHR12302:SF3">
    <property type="entry name" value="SERINE_THREONINE-PROTEIN KINASE 31"/>
    <property type="match status" value="1"/>
</dbReference>
<dbReference type="Pfam" id="PF00565">
    <property type="entry name" value="SNase"/>
    <property type="match status" value="1"/>
</dbReference>
<dbReference type="SMART" id="SM00318">
    <property type="entry name" value="SNc"/>
    <property type="match status" value="1"/>
</dbReference>
<dbReference type="SUPFAM" id="SSF50199">
    <property type="entry name" value="Staphylococcal nuclease"/>
    <property type="match status" value="1"/>
</dbReference>
<dbReference type="PROSITE" id="PS50830">
    <property type="entry name" value="TNASE_3"/>
    <property type="match status" value="1"/>
</dbReference>
<sequence length="233" mass="26267">MSDEPLSSSEESPSVSVLHPKVLLLSAGFTGAAAASYFLYGRYVRRVKTYLDLTPAILDGQRKLYGKVTRVGDGDNFRFFHTPGGVLLGWGWLRKIPDTRSGLKDQTLMVRLCGVDAPERSHFGKPAQPFSEEALQWLQSYVGGRSVTITPYSIDQYKRVVARAQVWRWTGKRDVSAEMLRNGLGVVYEANSGAEFGENEGWYRRLEEKAKRRRRGMWSLGSKLVTPGNFKRQ</sequence>
<name>LCL3_CLAL4</name>
<accession>C4Y4X4</accession>
<organism>
    <name type="scientific">Clavispora lusitaniae (strain ATCC 42720)</name>
    <name type="common">Yeast</name>
    <name type="synonym">Candida lusitaniae</name>
    <dbReference type="NCBI Taxonomy" id="306902"/>
    <lineage>
        <taxon>Eukaryota</taxon>
        <taxon>Fungi</taxon>
        <taxon>Dikarya</taxon>
        <taxon>Ascomycota</taxon>
        <taxon>Saccharomycotina</taxon>
        <taxon>Pichiomycetes</taxon>
        <taxon>Metschnikowiaceae</taxon>
        <taxon>Clavispora</taxon>
    </lineage>
</organism>